<accession>A7Z9L0</accession>
<organism>
    <name type="scientific">Bacillus velezensis (strain DSM 23117 / BGSC 10A6 / LMG 26770 / FZB42)</name>
    <name type="common">Bacillus amyloliquefaciens subsp. plantarum</name>
    <dbReference type="NCBI Taxonomy" id="326423"/>
    <lineage>
        <taxon>Bacteria</taxon>
        <taxon>Bacillati</taxon>
        <taxon>Bacillota</taxon>
        <taxon>Bacilli</taxon>
        <taxon>Bacillales</taxon>
        <taxon>Bacillaceae</taxon>
        <taxon>Bacillus</taxon>
        <taxon>Bacillus amyloliquefaciens group</taxon>
    </lineage>
</organism>
<protein>
    <recommendedName>
        <fullName evidence="1">3-hydroxyacyl-[acyl-carrier-protein] dehydratase FabZ</fullName>
        <ecNumber evidence="1">4.2.1.59</ecNumber>
    </recommendedName>
    <alternativeName>
        <fullName evidence="1">(3R)-hydroxymyristoyl-[acyl-carrier-protein] dehydratase</fullName>
        <shortName evidence="1">(3R)-hydroxymyristoyl-ACP dehydrase</shortName>
    </alternativeName>
    <alternativeName>
        <fullName evidence="1">Beta-hydroxyacyl-ACP dehydratase</fullName>
    </alternativeName>
</protein>
<feature type="chain" id="PRO_1000049833" description="3-hydroxyacyl-[acyl-carrier-protein] dehydratase FabZ">
    <location>
        <begin position="1"/>
        <end position="141"/>
    </location>
</feature>
<feature type="active site" evidence="1">
    <location>
        <position position="48"/>
    </location>
</feature>
<proteinExistence type="inferred from homology"/>
<name>FABZ_BACVZ</name>
<reference key="1">
    <citation type="journal article" date="2007" name="Nat. Biotechnol.">
        <title>Comparative analysis of the complete genome sequence of the plant growth-promoting bacterium Bacillus amyloliquefaciens FZB42.</title>
        <authorList>
            <person name="Chen X.H."/>
            <person name="Koumoutsi A."/>
            <person name="Scholz R."/>
            <person name="Eisenreich A."/>
            <person name="Schneider K."/>
            <person name="Heinemeyer I."/>
            <person name="Morgenstern B."/>
            <person name="Voss B."/>
            <person name="Hess W.R."/>
            <person name="Reva O."/>
            <person name="Junge H."/>
            <person name="Voigt B."/>
            <person name="Jungblut P.R."/>
            <person name="Vater J."/>
            <person name="Suessmuth R."/>
            <person name="Liesegang H."/>
            <person name="Strittmatter A."/>
            <person name="Gottschalk G."/>
            <person name="Borriss R."/>
        </authorList>
    </citation>
    <scope>NUCLEOTIDE SEQUENCE [LARGE SCALE GENOMIC DNA]</scope>
    <source>
        <strain>DSM 23117 / BGSC 10A6 / LMG 26770 / FZB42</strain>
    </source>
</reference>
<evidence type="ECO:0000255" key="1">
    <source>
        <dbReference type="HAMAP-Rule" id="MF_00406"/>
    </source>
</evidence>
<dbReference type="EC" id="4.2.1.59" evidence="1"/>
<dbReference type="EMBL" id="CP000560">
    <property type="protein sequence ID" value="ABS75686.1"/>
    <property type="molecule type" value="Genomic_DNA"/>
</dbReference>
<dbReference type="RefSeq" id="WP_003151242.1">
    <property type="nucleotide sequence ID" value="NC_009725.2"/>
</dbReference>
<dbReference type="SMR" id="A7Z9L0"/>
<dbReference type="GeneID" id="93082501"/>
<dbReference type="KEGG" id="bay:RBAM_033570"/>
<dbReference type="HOGENOM" id="CLU_078912_3_0_9"/>
<dbReference type="Proteomes" id="UP000001120">
    <property type="component" value="Chromosome"/>
</dbReference>
<dbReference type="GO" id="GO:0005737">
    <property type="term" value="C:cytoplasm"/>
    <property type="evidence" value="ECO:0007669"/>
    <property type="project" value="UniProtKB-SubCell"/>
</dbReference>
<dbReference type="GO" id="GO:0016020">
    <property type="term" value="C:membrane"/>
    <property type="evidence" value="ECO:0007669"/>
    <property type="project" value="GOC"/>
</dbReference>
<dbReference type="GO" id="GO:0019171">
    <property type="term" value="F:(3R)-hydroxyacyl-[acyl-carrier-protein] dehydratase activity"/>
    <property type="evidence" value="ECO:0007669"/>
    <property type="project" value="UniProtKB-EC"/>
</dbReference>
<dbReference type="GO" id="GO:0006633">
    <property type="term" value="P:fatty acid biosynthetic process"/>
    <property type="evidence" value="ECO:0007669"/>
    <property type="project" value="UniProtKB-UniRule"/>
</dbReference>
<dbReference type="GO" id="GO:0009245">
    <property type="term" value="P:lipid A biosynthetic process"/>
    <property type="evidence" value="ECO:0007669"/>
    <property type="project" value="UniProtKB-UniRule"/>
</dbReference>
<dbReference type="CDD" id="cd01288">
    <property type="entry name" value="FabZ"/>
    <property type="match status" value="1"/>
</dbReference>
<dbReference type="FunFam" id="3.10.129.10:FF:000001">
    <property type="entry name" value="3-hydroxyacyl-[acyl-carrier-protein] dehydratase FabZ"/>
    <property type="match status" value="1"/>
</dbReference>
<dbReference type="Gene3D" id="3.10.129.10">
    <property type="entry name" value="Hotdog Thioesterase"/>
    <property type="match status" value="1"/>
</dbReference>
<dbReference type="HAMAP" id="MF_00406">
    <property type="entry name" value="FabZ"/>
    <property type="match status" value="1"/>
</dbReference>
<dbReference type="InterPro" id="IPR013114">
    <property type="entry name" value="FabA_FabZ"/>
</dbReference>
<dbReference type="InterPro" id="IPR010084">
    <property type="entry name" value="FabZ"/>
</dbReference>
<dbReference type="InterPro" id="IPR029069">
    <property type="entry name" value="HotDog_dom_sf"/>
</dbReference>
<dbReference type="NCBIfam" id="TIGR01750">
    <property type="entry name" value="fabZ"/>
    <property type="match status" value="1"/>
</dbReference>
<dbReference type="NCBIfam" id="NF000582">
    <property type="entry name" value="PRK00006.1"/>
    <property type="match status" value="1"/>
</dbReference>
<dbReference type="PANTHER" id="PTHR30272">
    <property type="entry name" value="3-HYDROXYACYL-[ACYL-CARRIER-PROTEIN] DEHYDRATASE"/>
    <property type="match status" value="1"/>
</dbReference>
<dbReference type="PANTHER" id="PTHR30272:SF1">
    <property type="entry name" value="3-HYDROXYACYL-[ACYL-CARRIER-PROTEIN] DEHYDRATASE"/>
    <property type="match status" value="1"/>
</dbReference>
<dbReference type="Pfam" id="PF07977">
    <property type="entry name" value="FabA"/>
    <property type="match status" value="1"/>
</dbReference>
<dbReference type="SUPFAM" id="SSF54637">
    <property type="entry name" value="Thioesterase/thiol ester dehydrase-isomerase"/>
    <property type="match status" value="1"/>
</dbReference>
<sequence>MLDTQQIKEIIPHRYPFLLVDRITEVEEGKRAAGYKNVTANEDFFNGHFPEYPVMPGVLIVEALAQVGAVAMLIKEENRGRLAFFAGIDNCRFKKQVKPGDKLELEVDITRARGTIGRGKGVAKVDGELVCEAELTFALGE</sequence>
<gene>
    <name evidence="1" type="primary">fabZ</name>
    <name type="ordered locus">RBAM_033570</name>
</gene>
<keyword id="KW-0963">Cytoplasm</keyword>
<keyword id="KW-0441">Lipid A biosynthesis</keyword>
<keyword id="KW-0444">Lipid biosynthesis</keyword>
<keyword id="KW-0443">Lipid metabolism</keyword>
<keyword id="KW-0456">Lyase</keyword>
<comment type="function">
    <text evidence="1">Involved in unsaturated fatty acids biosynthesis. Catalyzes the dehydration of short chain beta-hydroxyacyl-ACPs and long chain saturated and unsaturated beta-hydroxyacyl-ACPs.</text>
</comment>
<comment type="catalytic activity">
    <reaction evidence="1">
        <text>a (3R)-hydroxyacyl-[ACP] = a (2E)-enoyl-[ACP] + H2O</text>
        <dbReference type="Rhea" id="RHEA:13097"/>
        <dbReference type="Rhea" id="RHEA-COMP:9925"/>
        <dbReference type="Rhea" id="RHEA-COMP:9945"/>
        <dbReference type="ChEBI" id="CHEBI:15377"/>
        <dbReference type="ChEBI" id="CHEBI:78784"/>
        <dbReference type="ChEBI" id="CHEBI:78827"/>
        <dbReference type="EC" id="4.2.1.59"/>
    </reaction>
</comment>
<comment type="subcellular location">
    <subcellularLocation>
        <location evidence="1">Cytoplasm</location>
    </subcellularLocation>
</comment>
<comment type="similarity">
    <text evidence="1">Belongs to the thioester dehydratase family. FabZ subfamily.</text>
</comment>